<gene>
    <name evidence="1" type="primary">msrB</name>
    <name type="ordered locus">CCNA_02265</name>
</gene>
<proteinExistence type="inferred from homology"/>
<sequence>MTDAATLSTAGFDLTPPTEAERERLEANLTAEEARVLLHHGTEAPFCGGLLGEKSPGVYGCRLCGLPLFKHETKFESGTGWPSFYAPFAEDHVVGVRDTSYGMVRIETRCARCDSHQGHVFPDGPAPTRLRYCINSVSLQFVKAGAPLPDPLHRGDKIT</sequence>
<evidence type="ECO:0000255" key="1">
    <source>
        <dbReference type="HAMAP-Rule" id="MF_01400"/>
    </source>
</evidence>
<evidence type="ECO:0000255" key="2">
    <source>
        <dbReference type="PROSITE-ProRule" id="PRU01126"/>
    </source>
</evidence>
<dbReference type="EC" id="1.8.4.12" evidence="1"/>
<dbReference type="EMBL" id="CP001340">
    <property type="protein sequence ID" value="ACL95730.1"/>
    <property type="molecule type" value="Genomic_DNA"/>
</dbReference>
<dbReference type="RefSeq" id="WP_010920044.1">
    <property type="nucleotide sequence ID" value="NC_011916.1"/>
</dbReference>
<dbReference type="RefSeq" id="YP_002517638.1">
    <property type="nucleotide sequence ID" value="NC_011916.1"/>
</dbReference>
<dbReference type="SMR" id="B8GY23"/>
<dbReference type="GeneID" id="7332630"/>
<dbReference type="KEGG" id="ccs:CCNA_02265"/>
<dbReference type="PATRIC" id="fig|565050.3.peg.2218"/>
<dbReference type="HOGENOM" id="CLU_031040_8_5_5"/>
<dbReference type="OrthoDB" id="9785497at2"/>
<dbReference type="PhylomeDB" id="B8GY23"/>
<dbReference type="Proteomes" id="UP000001364">
    <property type="component" value="Chromosome"/>
</dbReference>
<dbReference type="GO" id="GO:0005737">
    <property type="term" value="C:cytoplasm"/>
    <property type="evidence" value="ECO:0007669"/>
    <property type="project" value="TreeGrafter"/>
</dbReference>
<dbReference type="GO" id="GO:0033743">
    <property type="term" value="F:peptide-methionine (R)-S-oxide reductase activity"/>
    <property type="evidence" value="ECO:0007669"/>
    <property type="project" value="UniProtKB-UniRule"/>
</dbReference>
<dbReference type="GO" id="GO:0008270">
    <property type="term" value="F:zinc ion binding"/>
    <property type="evidence" value="ECO:0007669"/>
    <property type="project" value="UniProtKB-UniRule"/>
</dbReference>
<dbReference type="GO" id="GO:0030091">
    <property type="term" value="P:protein repair"/>
    <property type="evidence" value="ECO:0007669"/>
    <property type="project" value="InterPro"/>
</dbReference>
<dbReference type="GO" id="GO:0006979">
    <property type="term" value="P:response to oxidative stress"/>
    <property type="evidence" value="ECO:0007669"/>
    <property type="project" value="InterPro"/>
</dbReference>
<dbReference type="FunFam" id="2.170.150.20:FF:000001">
    <property type="entry name" value="Peptide methionine sulfoxide reductase MsrB"/>
    <property type="match status" value="1"/>
</dbReference>
<dbReference type="Gene3D" id="2.170.150.20">
    <property type="entry name" value="Peptide methionine sulfoxide reductase"/>
    <property type="match status" value="1"/>
</dbReference>
<dbReference type="HAMAP" id="MF_01400">
    <property type="entry name" value="MsrB"/>
    <property type="match status" value="1"/>
</dbReference>
<dbReference type="InterPro" id="IPR028427">
    <property type="entry name" value="Met_Sox_Rdtase_MsrB"/>
</dbReference>
<dbReference type="InterPro" id="IPR002579">
    <property type="entry name" value="Met_Sox_Rdtase_MsrB_dom"/>
</dbReference>
<dbReference type="InterPro" id="IPR011057">
    <property type="entry name" value="Mss4-like_sf"/>
</dbReference>
<dbReference type="NCBIfam" id="TIGR00357">
    <property type="entry name" value="peptide-methionine (R)-S-oxide reductase MsrB"/>
    <property type="match status" value="1"/>
</dbReference>
<dbReference type="PANTHER" id="PTHR10173">
    <property type="entry name" value="METHIONINE SULFOXIDE REDUCTASE"/>
    <property type="match status" value="1"/>
</dbReference>
<dbReference type="PANTHER" id="PTHR10173:SF52">
    <property type="entry name" value="METHIONINE-R-SULFOXIDE REDUCTASE B1"/>
    <property type="match status" value="1"/>
</dbReference>
<dbReference type="Pfam" id="PF01641">
    <property type="entry name" value="SelR"/>
    <property type="match status" value="1"/>
</dbReference>
<dbReference type="SUPFAM" id="SSF51316">
    <property type="entry name" value="Mss4-like"/>
    <property type="match status" value="1"/>
</dbReference>
<dbReference type="PROSITE" id="PS51790">
    <property type="entry name" value="MSRB"/>
    <property type="match status" value="1"/>
</dbReference>
<keyword id="KW-0479">Metal-binding</keyword>
<keyword id="KW-0560">Oxidoreductase</keyword>
<keyword id="KW-1185">Reference proteome</keyword>
<keyword id="KW-0862">Zinc</keyword>
<reference key="1">
    <citation type="journal article" date="2010" name="J. Bacteriol.">
        <title>The genetic basis of laboratory adaptation in Caulobacter crescentus.</title>
        <authorList>
            <person name="Marks M.E."/>
            <person name="Castro-Rojas C.M."/>
            <person name="Teiling C."/>
            <person name="Du L."/>
            <person name="Kapatral V."/>
            <person name="Walunas T.L."/>
            <person name="Crosson S."/>
        </authorList>
    </citation>
    <scope>NUCLEOTIDE SEQUENCE [LARGE SCALE GENOMIC DNA]</scope>
    <source>
        <strain>NA1000 / CB15N</strain>
    </source>
</reference>
<feature type="chain" id="PRO_1000184547" description="Peptide methionine sulfoxide reductase MsrB">
    <location>
        <begin position="1"/>
        <end position="159"/>
    </location>
</feature>
<feature type="domain" description="MsrB" evidence="2">
    <location>
        <begin position="22"/>
        <end position="144"/>
    </location>
</feature>
<feature type="active site" description="Nucleophile" evidence="2">
    <location>
        <position position="133"/>
    </location>
</feature>
<feature type="binding site" evidence="2">
    <location>
        <position position="61"/>
    </location>
    <ligand>
        <name>Zn(2+)</name>
        <dbReference type="ChEBI" id="CHEBI:29105"/>
    </ligand>
</feature>
<feature type="binding site" evidence="2">
    <location>
        <position position="64"/>
    </location>
    <ligand>
        <name>Zn(2+)</name>
        <dbReference type="ChEBI" id="CHEBI:29105"/>
    </ligand>
</feature>
<feature type="binding site" evidence="2">
    <location>
        <position position="110"/>
    </location>
    <ligand>
        <name>Zn(2+)</name>
        <dbReference type="ChEBI" id="CHEBI:29105"/>
    </ligand>
</feature>
<feature type="binding site" evidence="2">
    <location>
        <position position="113"/>
    </location>
    <ligand>
        <name>Zn(2+)</name>
        <dbReference type="ChEBI" id="CHEBI:29105"/>
    </ligand>
</feature>
<protein>
    <recommendedName>
        <fullName evidence="1">Peptide methionine sulfoxide reductase MsrB</fullName>
        <ecNumber evidence="1">1.8.4.12</ecNumber>
    </recommendedName>
    <alternativeName>
        <fullName evidence="1">Peptide-methionine (R)-S-oxide reductase</fullName>
    </alternativeName>
</protein>
<name>MSRB_CAUVN</name>
<comment type="catalytic activity">
    <reaction evidence="1">
        <text>L-methionyl-[protein] + [thioredoxin]-disulfide + H2O = L-methionyl-(R)-S-oxide-[protein] + [thioredoxin]-dithiol</text>
        <dbReference type="Rhea" id="RHEA:24164"/>
        <dbReference type="Rhea" id="RHEA-COMP:10698"/>
        <dbReference type="Rhea" id="RHEA-COMP:10700"/>
        <dbReference type="Rhea" id="RHEA-COMP:12313"/>
        <dbReference type="Rhea" id="RHEA-COMP:12314"/>
        <dbReference type="ChEBI" id="CHEBI:15377"/>
        <dbReference type="ChEBI" id="CHEBI:16044"/>
        <dbReference type="ChEBI" id="CHEBI:29950"/>
        <dbReference type="ChEBI" id="CHEBI:45764"/>
        <dbReference type="ChEBI" id="CHEBI:50058"/>
        <dbReference type="EC" id="1.8.4.12"/>
    </reaction>
</comment>
<comment type="cofactor">
    <cofactor evidence="1">
        <name>Zn(2+)</name>
        <dbReference type="ChEBI" id="CHEBI:29105"/>
    </cofactor>
    <text evidence="1">Binds 1 zinc ion per subunit. The zinc ion is important for the structural integrity of the protein.</text>
</comment>
<comment type="similarity">
    <text evidence="1">Belongs to the MsrB Met sulfoxide reductase family.</text>
</comment>
<organism>
    <name type="scientific">Caulobacter vibrioides (strain NA1000 / CB15N)</name>
    <name type="common">Caulobacter crescentus</name>
    <dbReference type="NCBI Taxonomy" id="565050"/>
    <lineage>
        <taxon>Bacteria</taxon>
        <taxon>Pseudomonadati</taxon>
        <taxon>Pseudomonadota</taxon>
        <taxon>Alphaproteobacteria</taxon>
        <taxon>Caulobacterales</taxon>
        <taxon>Caulobacteraceae</taxon>
        <taxon>Caulobacter</taxon>
    </lineage>
</organism>
<accession>B8GY23</accession>